<proteinExistence type="inferred from homology"/>
<protein>
    <recommendedName>
        <fullName evidence="1">Protoheme IX farnesyltransferase</fullName>
        <ecNumber evidence="1">2.5.1.141</ecNumber>
    </recommendedName>
    <alternativeName>
        <fullName evidence="1">Heme B farnesyltransferase</fullName>
    </alternativeName>
    <alternativeName>
        <fullName evidence="1">Heme O synthase</fullName>
    </alternativeName>
</protein>
<accession>B9KLZ5</accession>
<comment type="function">
    <text evidence="1">Converts heme B (protoheme IX) to heme O by substitution of the vinyl group on carbon 2 of heme B porphyrin ring with a hydroxyethyl farnesyl side group.</text>
</comment>
<comment type="catalytic activity">
    <reaction evidence="1">
        <text>heme b + (2E,6E)-farnesyl diphosphate + H2O = Fe(II)-heme o + diphosphate</text>
        <dbReference type="Rhea" id="RHEA:28070"/>
        <dbReference type="ChEBI" id="CHEBI:15377"/>
        <dbReference type="ChEBI" id="CHEBI:33019"/>
        <dbReference type="ChEBI" id="CHEBI:60344"/>
        <dbReference type="ChEBI" id="CHEBI:60530"/>
        <dbReference type="ChEBI" id="CHEBI:175763"/>
        <dbReference type="EC" id="2.5.1.141"/>
    </reaction>
</comment>
<comment type="pathway">
    <text evidence="1">Porphyrin-containing compound metabolism; heme O biosynthesis; heme O from protoheme: step 1/1.</text>
</comment>
<comment type="subunit">
    <text evidence="1">Interacts with CtaA.</text>
</comment>
<comment type="subcellular location">
    <subcellularLocation>
        <location evidence="1">Cell inner membrane</location>
        <topology evidence="1">Multi-pass membrane protein</topology>
    </subcellularLocation>
</comment>
<comment type="miscellaneous">
    <text evidence="1">Carbon 2 of the heme B porphyrin ring is defined according to the Fischer nomenclature.</text>
</comment>
<comment type="similarity">
    <text evidence="1">Belongs to the UbiA prenyltransferase family. Protoheme IX farnesyltransferase subfamily.</text>
</comment>
<organism>
    <name type="scientific">Cereibacter sphaeroides (strain KD131 / KCTC 12085)</name>
    <name type="common">Rhodobacter sphaeroides</name>
    <dbReference type="NCBI Taxonomy" id="557760"/>
    <lineage>
        <taxon>Bacteria</taxon>
        <taxon>Pseudomonadati</taxon>
        <taxon>Pseudomonadota</taxon>
        <taxon>Alphaproteobacteria</taxon>
        <taxon>Rhodobacterales</taxon>
        <taxon>Paracoccaceae</taxon>
        <taxon>Cereibacter</taxon>
    </lineage>
</organism>
<reference key="1">
    <citation type="journal article" date="2009" name="J. Bacteriol.">
        <title>Complete genome sequence of Rhodobacter sphaeroides KD131.</title>
        <authorList>
            <person name="Lim S.-K."/>
            <person name="Kim S.J."/>
            <person name="Cha S.H."/>
            <person name="Oh Y.-K."/>
            <person name="Rhee H.-J."/>
            <person name="Kim M.-S."/>
            <person name="Lee J.K."/>
        </authorList>
    </citation>
    <scope>NUCLEOTIDE SEQUENCE [LARGE SCALE GENOMIC DNA]</scope>
    <source>
        <strain>KD131 / KCTC 12085</strain>
    </source>
</reference>
<keyword id="KW-0997">Cell inner membrane</keyword>
<keyword id="KW-1003">Cell membrane</keyword>
<keyword id="KW-0350">Heme biosynthesis</keyword>
<keyword id="KW-0472">Membrane</keyword>
<keyword id="KW-0808">Transferase</keyword>
<keyword id="KW-0812">Transmembrane</keyword>
<keyword id="KW-1133">Transmembrane helix</keyword>
<feature type="chain" id="PRO_1000199659" description="Protoheme IX farnesyltransferase">
    <location>
        <begin position="1"/>
        <end position="310"/>
    </location>
</feature>
<feature type="transmembrane region" description="Helical" evidence="1">
    <location>
        <begin position="21"/>
        <end position="43"/>
    </location>
</feature>
<feature type="transmembrane region" description="Helical" evidence="1">
    <location>
        <begin position="48"/>
        <end position="70"/>
    </location>
</feature>
<feature type="transmembrane region" description="Helical" evidence="1">
    <location>
        <begin position="95"/>
        <end position="115"/>
    </location>
</feature>
<feature type="transmembrane region" description="Helical" evidence="1">
    <location>
        <begin position="118"/>
        <end position="138"/>
    </location>
</feature>
<feature type="transmembrane region" description="Helical" evidence="1">
    <location>
        <begin position="147"/>
        <end position="167"/>
    </location>
</feature>
<feature type="transmembrane region" description="Helical" evidence="1">
    <location>
        <begin position="174"/>
        <end position="194"/>
    </location>
</feature>
<feature type="transmembrane region" description="Helical" evidence="1">
    <location>
        <begin position="220"/>
        <end position="240"/>
    </location>
</feature>
<feature type="transmembrane region" description="Helical" evidence="1">
    <location>
        <begin position="243"/>
        <end position="263"/>
    </location>
</feature>
<feature type="transmembrane region" description="Helical" evidence="1">
    <location>
        <begin position="289"/>
        <end position="309"/>
    </location>
</feature>
<evidence type="ECO:0000255" key="1">
    <source>
        <dbReference type="HAMAP-Rule" id="MF_00154"/>
    </source>
</evidence>
<name>COXX_CERSK</name>
<gene>
    <name evidence="1" type="primary">ctaB</name>
    <name type="ordered locus">RSKD131_0133</name>
</gene>
<sequence>MTDIRITGIPKEAGFGDYVALLKPRVMSLVVFTALVGLLVAPVTVHPMIALTGILFIALGAGASGALNMWWDEDIDRVMKRTRNRPVPSGIVAPGEALGIGLALSGIAVVMLGLATNLFAAGLLAFTIFFYAVVYSMWLKRTTPQNIVIGGAAGAFPPMIGWAVATGGVSVESLFMFALIFMWTPPHFWSLALFMKSDYSDAGVPMLTVTHGRRVTRAHVLVYSLLLAPLAVAGAFTGIGGPLYLATALALNGWLLVGAVRIWRRDEAQAEADRYRVEKGFFRFSLYYLFLHFGAILAEAALKPYGLGGW</sequence>
<dbReference type="EC" id="2.5.1.141" evidence="1"/>
<dbReference type="EMBL" id="CP001150">
    <property type="protein sequence ID" value="ACL99992.1"/>
    <property type="molecule type" value="Genomic_DNA"/>
</dbReference>
<dbReference type="RefSeq" id="WP_012643502.1">
    <property type="nucleotide sequence ID" value="NC_011963.1"/>
</dbReference>
<dbReference type="SMR" id="B9KLZ5"/>
<dbReference type="GeneID" id="67445616"/>
<dbReference type="KEGG" id="rsk:RSKD131_0133"/>
<dbReference type="HOGENOM" id="CLU_029631_0_2_5"/>
<dbReference type="UniPathway" id="UPA00834">
    <property type="reaction ID" value="UER00712"/>
</dbReference>
<dbReference type="GO" id="GO:0005886">
    <property type="term" value="C:plasma membrane"/>
    <property type="evidence" value="ECO:0007669"/>
    <property type="project" value="UniProtKB-SubCell"/>
</dbReference>
<dbReference type="GO" id="GO:0008495">
    <property type="term" value="F:protoheme IX farnesyltransferase activity"/>
    <property type="evidence" value="ECO:0007669"/>
    <property type="project" value="UniProtKB-UniRule"/>
</dbReference>
<dbReference type="GO" id="GO:0048034">
    <property type="term" value="P:heme O biosynthetic process"/>
    <property type="evidence" value="ECO:0007669"/>
    <property type="project" value="UniProtKB-UniRule"/>
</dbReference>
<dbReference type="CDD" id="cd13957">
    <property type="entry name" value="PT_UbiA_Cox10"/>
    <property type="match status" value="1"/>
</dbReference>
<dbReference type="Gene3D" id="1.10.357.140">
    <property type="entry name" value="UbiA prenyltransferase"/>
    <property type="match status" value="1"/>
</dbReference>
<dbReference type="HAMAP" id="MF_00154">
    <property type="entry name" value="CyoE_CtaB"/>
    <property type="match status" value="1"/>
</dbReference>
<dbReference type="InterPro" id="IPR006369">
    <property type="entry name" value="Protohaem_IX_farnesylTrfase"/>
</dbReference>
<dbReference type="InterPro" id="IPR000537">
    <property type="entry name" value="UbiA_prenyltransferase"/>
</dbReference>
<dbReference type="InterPro" id="IPR030470">
    <property type="entry name" value="UbiA_prenylTrfase_CS"/>
</dbReference>
<dbReference type="InterPro" id="IPR044878">
    <property type="entry name" value="UbiA_sf"/>
</dbReference>
<dbReference type="NCBIfam" id="TIGR01473">
    <property type="entry name" value="cyoE_ctaB"/>
    <property type="match status" value="1"/>
</dbReference>
<dbReference type="NCBIfam" id="NF003349">
    <property type="entry name" value="PRK04375.1-2"/>
    <property type="match status" value="1"/>
</dbReference>
<dbReference type="PANTHER" id="PTHR43448:SF7">
    <property type="entry name" value="4-HYDROXYBENZOATE SOLANESYLTRANSFERASE"/>
    <property type="match status" value="1"/>
</dbReference>
<dbReference type="PANTHER" id="PTHR43448">
    <property type="entry name" value="PROTOHEME IX FARNESYLTRANSFERASE, MITOCHONDRIAL"/>
    <property type="match status" value="1"/>
</dbReference>
<dbReference type="Pfam" id="PF01040">
    <property type="entry name" value="UbiA"/>
    <property type="match status" value="1"/>
</dbReference>
<dbReference type="PROSITE" id="PS00943">
    <property type="entry name" value="UBIA"/>
    <property type="match status" value="1"/>
</dbReference>